<organism>
    <name type="scientific">Cutibacterium acnes (strain DSM 16379 / KPA171202)</name>
    <name type="common">Propionibacterium acnes</name>
    <dbReference type="NCBI Taxonomy" id="267747"/>
    <lineage>
        <taxon>Bacteria</taxon>
        <taxon>Bacillati</taxon>
        <taxon>Actinomycetota</taxon>
        <taxon>Actinomycetes</taxon>
        <taxon>Propionibacteriales</taxon>
        <taxon>Propionibacteriaceae</taxon>
        <taxon>Cutibacterium</taxon>
    </lineage>
</organism>
<accession>Q6AB62</accession>
<keyword id="KW-0067">ATP-binding</keyword>
<keyword id="KW-0418">Kinase</keyword>
<keyword id="KW-0545">Nucleotide biosynthesis</keyword>
<keyword id="KW-0547">Nucleotide-binding</keyword>
<keyword id="KW-0808">Transferase</keyword>
<protein>
    <recommendedName>
        <fullName evidence="1">Thymidylate kinase</fullName>
        <ecNumber evidence="1">2.7.4.9</ecNumber>
    </recommendedName>
    <alternativeName>
        <fullName evidence="1">dTMP kinase</fullName>
    </alternativeName>
</protein>
<evidence type="ECO:0000255" key="1">
    <source>
        <dbReference type="HAMAP-Rule" id="MF_00165"/>
    </source>
</evidence>
<evidence type="ECO:0000305" key="2"/>
<comment type="function">
    <text evidence="1">Phosphorylation of dTMP to form dTDP in both de novo and salvage pathways of dTTP synthesis.</text>
</comment>
<comment type="catalytic activity">
    <reaction evidence="1">
        <text>dTMP + ATP = dTDP + ADP</text>
        <dbReference type="Rhea" id="RHEA:13517"/>
        <dbReference type="ChEBI" id="CHEBI:30616"/>
        <dbReference type="ChEBI" id="CHEBI:58369"/>
        <dbReference type="ChEBI" id="CHEBI:63528"/>
        <dbReference type="ChEBI" id="CHEBI:456216"/>
        <dbReference type="EC" id="2.7.4.9"/>
    </reaction>
</comment>
<comment type="similarity">
    <text evidence="1">Belongs to the thymidylate kinase family.</text>
</comment>
<comment type="sequence caution" evidence="2">
    <conflict type="erroneous initiation">
        <sequence resource="EMBL-CDS" id="AAT82004"/>
    </conflict>
</comment>
<feature type="chain" id="PRO_0000155320" description="Thymidylate kinase">
    <location>
        <begin position="1"/>
        <end position="204"/>
    </location>
</feature>
<feature type="binding site" evidence="1">
    <location>
        <begin position="10"/>
        <end position="17"/>
    </location>
    <ligand>
        <name>ATP</name>
        <dbReference type="ChEBI" id="CHEBI:30616"/>
    </ligand>
</feature>
<gene>
    <name evidence="1" type="primary">tmk</name>
    <name type="ordered locus">PPA0243</name>
</gene>
<reference key="1">
    <citation type="journal article" date="2004" name="Science">
        <title>The complete genome sequence of Propionibacterium acnes, a commensal of human skin.</title>
        <authorList>
            <person name="Brueggemann H."/>
            <person name="Henne A."/>
            <person name="Hoster F."/>
            <person name="Liesegang H."/>
            <person name="Wiezer A."/>
            <person name="Strittmatter A."/>
            <person name="Hujer S."/>
            <person name="Duerre P."/>
            <person name="Gottschalk G."/>
        </authorList>
    </citation>
    <scope>NUCLEOTIDE SEQUENCE [LARGE SCALE GENOMIC DNA]</scope>
    <source>
        <strain>DSM 16379 / KPA171202</strain>
    </source>
</reference>
<proteinExistence type="inferred from homology"/>
<sequence length="204" mass="22148">MGGVFVVFEGGDGAGKTTQARLLDQWLTTEGIPHLMTREPGDSWLGQRIRELVLSPGSGPISSRAEALLYNADKAQHVDEVVIPALREGKVVVCDRYVDSTIAYQGAGRALDPGEVGQLACWATTGLVPDVTVLLDVDPCEGAGKIAAKDRLEAAGDEFHLRVRQHFLDLAAAHPQRYLVLNARKSRKEISEAIRQRVTGLLNR</sequence>
<dbReference type="EC" id="2.7.4.9" evidence="1"/>
<dbReference type="EMBL" id="AE017283">
    <property type="protein sequence ID" value="AAT82004.1"/>
    <property type="status" value="ALT_INIT"/>
    <property type="molecule type" value="Genomic_DNA"/>
</dbReference>
<dbReference type="SMR" id="Q6AB62"/>
<dbReference type="EnsemblBacteria" id="AAT82004">
    <property type="protein sequence ID" value="AAT82004"/>
    <property type="gene ID" value="PPA0243"/>
</dbReference>
<dbReference type="KEGG" id="pac:PPA0243"/>
<dbReference type="eggNOG" id="COG0125">
    <property type="taxonomic scope" value="Bacteria"/>
</dbReference>
<dbReference type="HOGENOM" id="CLU_049131_0_2_11"/>
<dbReference type="Proteomes" id="UP000000603">
    <property type="component" value="Chromosome"/>
</dbReference>
<dbReference type="GO" id="GO:0005829">
    <property type="term" value="C:cytosol"/>
    <property type="evidence" value="ECO:0007669"/>
    <property type="project" value="TreeGrafter"/>
</dbReference>
<dbReference type="GO" id="GO:0005524">
    <property type="term" value="F:ATP binding"/>
    <property type="evidence" value="ECO:0007669"/>
    <property type="project" value="UniProtKB-UniRule"/>
</dbReference>
<dbReference type="GO" id="GO:0004798">
    <property type="term" value="F:dTMP kinase activity"/>
    <property type="evidence" value="ECO:0007669"/>
    <property type="project" value="UniProtKB-UniRule"/>
</dbReference>
<dbReference type="GO" id="GO:0006233">
    <property type="term" value="P:dTDP biosynthetic process"/>
    <property type="evidence" value="ECO:0007669"/>
    <property type="project" value="InterPro"/>
</dbReference>
<dbReference type="GO" id="GO:0006235">
    <property type="term" value="P:dTTP biosynthetic process"/>
    <property type="evidence" value="ECO:0007669"/>
    <property type="project" value="UniProtKB-UniRule"/>
</dbReference>
<dbReference type="GO" id="GO:0006227">
    <property type="term" value="P:dUDP biosynthetic process"/>
    <property type="evidence" value="ECO:0007669"/>
    <property type="project" value="TreeGrafter"/>
</dbReference>
<dbReference type="CDD" id="cd01672">
    <property type="entry name" value="TMPK"/>
    <property type="match status" value="1"/>
</dbReference>
<dbReference type="FunFam" id="3.40.50.300:FF:000225">
    <property type="entry name" value="Thymidylate kinase"/>
    <property type="match status" value="1"/>
</dbReference>
<dbReference type="Gene3D" id="3.40.50.300">
    <property type="entry name" value="P-loop containing nucleotide triphosphate hydrolases"/>
    <property type="match status" value="1"/>
</dbReference>
<dbReference type="HAMAP" id="MF_00165">
    <property type="entry name" value="Thymidylate_kinase"/>
    <property type="match status" value="1"/>
</dbReference>
<dbReference type="InterPro" id="IPR027417">
    <property type="entry name" value="P-loop_NTPase"/>
</dbReference>
<dbReference type="InterPro" id="IPR039430">
    <property type="entry name" value="Thymidylate_kin-like_dom"/>
</dbReference>
<dbReference type="InterPro" id="IPR018095">
    <property type="entry name" value="Thymidylate_kin_CS"/>
</dbReference>
<dbReference type="InterPro" id="IPR018094">
    <property type="entry name" value="Thymidylate_kinase"/>
</dbReference>
<dbReference type="NCBIfam" id="TIGR00041">
    <property type="entry name" value="DTMP_kinase"/>
    <property type="match status" value="1"/>
</dbReference>
<dbReference type="PANTHER" id="PTHR10344">
    <property type="entry name" value="THYMIDYLATE KINASE"/>
    <property type="match status" value="1"/>
</dbReference>
<dbReference type="PANTHER" id="PTHR10344:SF4">
    <property type="entry name" value="UMP-CMP KINASE 2, MITOCHONDRIAL"/>
    <property type="match status" value="1"/>
</dbReference>
<dbReference type="Pfam" id="PF02223">
    <property type="entry name" value="Thymidylate_kin"/>
    <property type="match status" value="1"/>
</dbReference>
<dbReference type="SUPFAM" id="SSF52540">
    <property type="entry name" value="P-loop containing nucleoside triphosphate hydrolases"/>
    <property type="match status" value="1"/>
</dbReference>
<dbReference type="PROSITE" id="PS01331">
    <property type="entry name" value="THYMIDYLATE_KINASE"/>
    <property type="match status" value="1"/>
</dbReference>
<name>KTHY_CUTAK</name>